<dbReference type="EC" id="3.6.4.12"/>
<dbReference type="EMBL" id="U14731">
    <property type="protein sequence ID" value="AAA86310.1"/>
    <property type="molecule type" value="Genomic_DNA"/>
</dbReference>
<dbReference type="EMBL" id="Z49919">
    <property type="protein sequence ID" value="CAA90164.1"/>
    <property type="molecule type" value="Genomic_DNA"/>
</dbReference>
<dbReference type="EMBL" id="Z71255">
    <property type="protein sequence ID" value="CAA95015.1"/>
    <property type="molecule type" value="Genomic_DNA"/>
</dbReference>
<dbReference type="EMBL" id="Z15032">
    <property type="protein sequence ID" value="CAA78750.1"/>
    <property type="molecule type" value="Genomic_DNA"/>
</dbReference>
<dbReference type="EMBL" id="BK006949">
    <property type="protein sequence ID" value="DAA11445.1"/>
    <property type="molecule type" value="Genomic_DNA"/>
</dbReference>
<dbReference type="PIR" id="S56050">
    <property type="entry name" value="S56050"/>
</dbReference>
<dbReference type="RefSeq" id="NP_015344.1">
    <property type="nucleotide sequence ID" value="NM_001184116.1"/>
</dbReference>
<dbReference type="PDB" id="3JA8">
    <property type="method" value="EM"/>
    <property type="resolution" value="3.80 A"/>
    <property type="chains" value="4=1-933"/>
</dbReference>
<dbReference type="PDB" id="3JC5">
    <property type="method" value="EM"/>
    <property type="resolution" value="4.70 A"/>
    <property type="chains" value="4=1-933"/>
</dbReference>
<dbReference type="PDB" id="3JC6">
    <property type="method" value="EM"/>
    <property type="resolution" value="3.70 A"/>
    <property type="chains" value="4=1-933"/>
</dbReference>
<dbReference type="PDB" id="3JC7">
    <property type="method" value="EM"/>
    <property type="resolution" value="4.80 A"/>
    <property type="chains" value="4=1-933"/>
</dbReference>
<dbReference type="PDB" id="5BK4">
    <property type="method" value="EM"/>
    <property type="resolution" value="3.90 A"/>
    <property type="chains" value="4/C=1-933"/>
</dbReference>
<dbReference type="PDB" id="5U8S">
    <property type="method" value="EM"/>
    <property type="resolution" value="6.10 A"/>
    <property type="chains" value="4=1-933"/>
</dbReference>
<dbReference type="PDB" id="5U8T">
    <property type="method" value="EM"/>
    <property type="resolution" value="4.90 A"/>
    <property type="chains" value="4=1-933"/>
</dbReference>
<dbReference type="PDB" id="5V8F">
    <property type="method" value="EM"/>
    <property type="resolution" value="3.90 A"/>
    <property type="chains" value="4=1-933"/>
</dbReference>
<dbReference type="PDB" id="5XF8">
    <property type="method" value="EM"/>
    <property type="resolution" value="7.10 A"/>
    <property type="chains" value="4=1-933"/>
</dbReference>
<dbReference type="PDB" id="6EYC">
    <property type="method" value="EM"/>
    <property type="resolution" value="3.80 A"/>
    <property type="chains" value="4=1-933"/>
</dbReference>
<dbReference type="PDB" id="6F0L">
    <property type="method" value="EM"/>
    <property type="resolution" value="4.77 A"/>
    <property type="chains" value="4/C=1-933"/>
</dbReference>
<dbReference type="PDB" id="6HV9">
    <property type="method" value="EM"/>
    <property type="resolution" value="4.98 A"/>
    <property type="chains" value="4=1-933"/>
</dbReference>
<dbReference type="PDB" id="6PTJ">
    <property type="method" value="EM"/>
    <property type="resolution" value="3.80 A"/>
    <property type="chains" value="4=1-933"/>
</dbReference>
<dbReference type="PDB" id="6PTN">
    <property type="method" value="EM"/>
    <property type="resolution" value="5.80 A"/>
    <property type="chains" value="4/k=1-933"/>
</dbReference>
<dbReference type="PDB" id="6PTO">
    <property type="method" value="EM"/>
    <property type="resolution" value="7.00 A"/>
    <property type="chains" value="4/H/j=1-933"/>
</dbReference>
<dbReference type="PDB" id="6RQC">
    <property type="method" value="EM"/>
    <property type="resolution" value="4.40 A"/>
    <property type="chains" value="4=1-933"/>
</dbReference>
<dbReference type="PDB" id="6SKL">
    <property type="method" value="EM"/>
    <property type="resolution" value="3.70 A"/>
    <property type="chains" value="4=1-933"/>
</dbReference>
<dbReference type="PDB" id="6SKO">
    <property type="method" value="EM"/>
    <property type="resolution" value="3.40 A"/>
    <property type="chains" value="4=1-933"/>
</dbReference>
<dbReference type="PDB" id="6U0M">
    <property type="method" value="EM"/>
    <property type="resolution" value="3.90 A"/>
    <property type="chains" value="4=177-929"/>
</dbReference>
<dbReference type="PDB" id="6WGF">
    <property type="method" value="EM"/>
    <property type="resolution" value="7.70 A"/>
    <property type="chains" value="4=1-933"/>
</dbReference>
<dbReference type="PDB" id="6WGG">
    <property type="method" value="EM"/>
    <property type="resolution" value="8.10 A"/>
    <property type="chains" value="4=1-933"/>
</dbReference>
<dbReference type="PDB" id="6WGI">
    <property type="method" value="EM"/>
    <property type="resolution" value="10.00 A"/>
    <property type="chains" value="4=1-933"/>
</dbReference>
<dbReference type="PDB" id="7P30">
    <property type="method" value="EM"/>
    <property type="resolution" value="3.00 A"/>
    <property type="chains" value="4/C=1-933"/>
</dbReference>
<dbReference type="PDB" id="7P5Z">
    <property type="method" value="EM"/>
    <property type="resolution" value="3.30 A"/>
    <property type="chains" value="4/C=1-933"/>
</dbReference>
<dbReference type="PDB" id="7PMK">
    <property type="method" value="EM"/>
    <property type="resolution" value="3.20 A"/>
    <property type="chains" value="4=1-933"/>
</dbReference>
<dbReference type="PDB" id="7PMN">
    <property type="method" value="EM"/>
    <property type="resolution" value="3.20 A"/>
    <property type="chains" value="4=1-933"/>
</dbReference>
<dbReference type="PDB" id="7PT6">
    <property type="method" value="EM"/>
    <property type="resolution" value="3.20 A"/>
    <property type="chains" value="4/D=1-933"/>
</dbReference>
<dbReference type="PDB" id="7PT7">
    <property type="method" value="EM"/>
    <property type="resolution" value="3.80 A"/>
    <property type="chains" value="4/D=1-933"/>
</dbReference>
<dbReference type="PDB" id="7QHS">
    <property type="method" value="EM"/>
    <property type="resolution" value="3.30 A"/>
    <property type="chains" value="4=1-933"/>
</dbReference>
<dbReference type="PDB" id="7V3U">
    <property type="method" value="EM"/>
    <property type="resolution" value="3.20 A"/>
    <property type="chains" value="4/D=1-933"/>
</dbReference>
<dbReference type="PDB" id="7V3V">
    <property type="method" value="EM"/>
    <property type="resolution" value="2.90 A"/>
    <property type="chains" value="4/D=1-933"/>
</dbReference>
<dbReference type="PDB" id="7W8G">
    <property type="method" value="EM"/>
    <property type="resolution" value="2.52 A"/>
    <property type="chains" value="4/D=1-933"/>
</dbReference>
<dbReference type="PDB" id="7Z13">
    <property type="method" value="EM"/>
    <property type="resolution" value="3.40 A"/>
    <property type="chains" value="4/c=1-933"/>
</dbReference>
<dbReference type="PDB" id="8B9A">
    <property type="method" value="EM"/>
    <property type="resolution" value="3.50 A"/>
    <property type="chains" value="4=1-933"/>
</dbReference>
<dbReference type="PDB" id="8B9B">
    <property type="method" value="EM"/>
    <property type="resolution" value="3.50 A"/>
    <property type="chains" value="4=1-933"/>
</dbReference>
<dbReference type="PDB" id="8B9C">
    <property type="method" value="EM"/>
    <property type="resolution" value="4.60 A"/>
    <property type="chains" value="4=1-933"/>
</dbReference>
<dbReference type="PDB" id="8KG6">
    <property type="method" value="EM"/>
    <property type="resolution" value="3.07 A"/>
    <property type="chains" value="4=1-933"/>
</dbReference>
<dbReference type="PDB" id="8KG8">
    <property type="method" value="EM"/>
    <property type="resolution" value="4.23 A"/>
    <property type="chains" value="4=1-933"/>
</dbReference>
<dbReference type="PDB" id="8KG9">
    <property type="method" value="EM"/>
    <property type="resolution" value="4.52 A"/>
    <property type="chains" value="4=1-933"/>
</dbReference>
<dbReference type="PDB" id="8P5E">
    <property type="method" value="EM"/>
    <property type="resolution" value="3.90 A"/>
    <property type="chains" value="4=1-933"/>
</dbReference>
<dbReference type="PDB" id="8P62">
    <property type="method" value="EM"/>
    <property type="resolution" value="3.90 A"/>
    <property type="chains" value="4=1-933"/>
</dbReference>
<dbReference type="PDB" id="8P63">
    <property type="method" value="EM"/>
    <property type="resolution" value="3.70 A"/>
    <property type="chains" value="4=1-933"/>
</dbReference>
<dbReference type="PDB" id="8RIF">
    <property type="method" value="EM"/>
    <property type="resolution" value="2.79 A"/>
    <property type="chains" value="4/C=1-933"/>
</dbReference>
<dbReference type="PDB" id="8RIG">
    <property type="method" value="EM"/>
    <property type="resolution" value="3.41 A"/>
    <property type="chains" value="4=1-933"/>
</dbReference>
<dbReference type="PDB" id="8W7M">
    <property type="method" value="EM"/>
    <property type="resolution" value="4.12 A"/>
    <property type="chains" value="4=1-933"/>
</dbReference>
<dbReference type="PDB" id="8W7S">
    <property type="method" value="EM"/>
    <property type="resolution" value="7.39 A"/>
    <property type="chains" value="4=1-933"/>
</dbReference>
<dbReference type="PDB" id="8XGC">
    <property type="method" value="EM"/>
    <property type="resolution" value="3.70 A"/>
    <property type="chains" value="4=1-933"/>
</dbReference>
<dbReference type="PDB" id="9BCX">
    <property type="method" value="EM"/>
    <property type="resolution" value="6.10 A"/>
    <property type="chains" value="4=1-933"/>
</dbReference>
<dbReference type="PDB" id="9GJP">
    <property type="method" value="EM"/>
    <property type="resolution" value="3.40 A"/>
    <property type="chains" value="4=1-933"/>
</dbReference>
<dbReference type="PDB" id="9GJW">
    <property type="method" value="EM"/>
    <property type="resolution" value="3.30 A"/>
    <property type="chains" value="4=1-933"/>
</dbReference>
<dbReference type="PDB" id="9GM5">
    <property type="method" value="EM"/>
    <property type="resolution" value="3.70 A"/>
    <property type="chains" value="4=1-933"/>
</dbReference>
<dbReference type="PDBsum" id="3JA8"/>
<dbReference type="PDBsum" id="3JC5"/>
<dbReference type="PDBsum" id="3JC6"/>
<dbReference type="PDBsum" id="3JC7"/>
<dbReference type="PDBsum" id="5BK4"/>
<dbReference type="PDBsum" id="5U8S"/>
<dbReference type="PDBsum" id="5U8T"/>
<dbReference type="PDBsum" id="5V8F"/>
<dbReference type="PDBsum" id="5XF8"/>
<dbReference type="PDBsum" id="6EYC"/>
<dbReference type="PDBsum" id="6F0L"/>
<dbReference type="PDBsum" id="6HV9"/>
<dbReference type="PDBsum" id="6PTJ"/>
<dbReference type="PDBsum" id="6PTN"/>
<dbReference type="PDBsum" id="6PTO"/>
<dbReference type="PDBsum" id="6RQC"/>
<dbReference type="PDBsum" id="6SKL"/>
<dbReference type="PDBsum" id="6SKO"/>
<dbReference type="PDBsum" id="6U0M"/>
<dbReference type="PDBsum" id="6WGF"/>
<dbReference type="PDBsum" id="6WGG"/>
<dbReference type="PDBsum" id="6WGI"/>
<dbReference type="PDBsum" id="7P30"/>
<dbReference type="PDBsum" id="7P5Z"/>
<dbReference type="PDBsum" id="7PMK"/>
<dbReference type="PDBsum" id="7PMN"/>
<dbReference type="PDBsum" id="7PT6"/>
<dbReference type="PDBsum" id="7PT7"/>
<dbReference type="PDBsum" id="7QHS"/>
<dbReference type="PDBsum" id="7V3U"/>
<dbReference type="PDBsum" id="7V3V"/>
<dbReference type="PDBsum" id="7W8G"/>
<dbReference type="PDBsum" id="7Z13"/>
<dbReference type="PDBsum" id="8B9A"/>
<dbReference type="PDBsum" id="8B9B"/>
<dbReference type="PDBsum" id="8B9C"/>
<dbReference type="PDBsum" id="8KG6"/>
<dbReference type="PDBsum" id="8KG8"/>
<dbReference type="PDBsum" id="8KG9"/>
<dbReference type="PDBsum" id="8P5E"/>
<dbReference type="PDBsum" id="8P62"/>
<dbReference type="PDBsum" id="8P63"/>
<dbReference type="PDBsum" id="8RIF"/>
<dbReference type="PDBsum" id="8RIG"/>
<dbReference type="PDBsum" id="8W7M"/>
<dbReference type="PDBsum" id="8W7S"/>
<dbReference type="PDBsum" id="8XGC"/>
<dbReference type="PDBsum" id="9BCX"/>
<dbReference type="PDBsum" id="9GJP"/>
<dbReference type="PDBsum" id="9GJW"/>
<dbReference type="PDBsum" id="9GM5"/>
<dbReference type="EMDB" id="EMD-0288"/>
<dbReference type="EMDB" id="EMD-10227"/>
<dbReference type="EMDB" id="EMD-10230"/>
<dbReference type="EMDB" id="EMD-13176"/>
<dbReference type="EMDB" id="EMD-13211"/>
<dbReference type="EMDB" id="EMD-13537"/>
<dbReference type="EMDB" id="EMD-13539"/>
<dbReference type="EMDB" id="EMD-13619"/>
<dbReference type="EMDB" id="EMD-13620"/>
<dbReference type="EMDB" id="EMD-13624"/>
<dbReference type="EMDB" id="EMD-13629"/>
<dbReference type="EMDB" id="EMD-13640"/>
<dbReference type="EMDB" id="EMD-13644"/>
<dbReference type="EMDB" id="EMD-13647"/>
<dbReference type="EMDB" id="EMD-13648"/>
<dbReference type="EMDB" id="EMD-13656"/>
<dbReference type="EMDB" id="EMD-13978"/>
<dbReference type="EMDB" id="EMD-14439"/>
<dbReference type="EMDB" id="EMD-15924"/>
<dbReference type="EMDB" id="EMD-17449"/>
<dbReference type="EMDB" id="EMD-17458"/>
<dbReference type="EMDB" id="EMD-17459"/>
<dbReference type="EMDB" id="EMD-19186"/>
<dbReference type="EMDB" id="EMD-19187"/>
<dbReference type="EMDB" id="EMD-20471"/>
<dbReference type="EMDB" id="EMD-20472"/>
<dbReference type="EMDB" id="EMD-20473"/>
<dbReference type="EMDB" id="EMD-20607"/>
<dbReference type="EMDB" id="EMD-21664"/>
<dbReference type="EMDB" id="EMD-21665"/>
<dbReference type="EMDB" id="EMD-21666"/>
<dbReference type="EMDB" id="EMD-31684"/>
<dbReference type="EMDB" id="EMD-31685"/>
<dbReference type="EMDB" id="EMD-32355"/>
<dbReference type="EMDB" id="EMD-37211"/>
<dbReference type="EMDB" id="EMD-37213"/>
<dbReference type="EMDB" id="EMD-37215"/>
<dbReference type="EMDB" id="EMD-37343"/>
<dbReference type="EMDB" id="EMD-37345"/>
<dbReference type="EMDB" id="EMD-38317"/>
<dbReference type="EMDB" id="EMD-4980"/>
<dbReference type="EMDB" id="EMD-51401"/>
<dbReference type="EMDB" id="EMD-51407"/>
<dbReference type="EMDB" id="EMD-51441"/>
<dbReference type="EMDB" id="EMD-6671"/>
<dbReference type="EMDB" id="EMD-8518"/>
<dbReference type="EMDB" id="EMD-8519"/>
<dbReference type="EMDB" id="EMD-8540"/>
<dbReference type="EMDB" id="EMD-9400"/>
<dbReference type="SMR" id="P30665"/>
<dbReference type="BioGRID" id="36196">
    <property type="interactions" value="194"/>
</dbReference>
<dbReference type="ComplexPortal" id="CPX-2944">
    <property type="entry name" value="MCM complex"/>
</dbReference>
<dbReference type="DIP" id="DIP-2409N"/>
<dbReference type="FunCoup" id="P30665">
    <property type="interactions" value="1304"/>
</dbReference>
<dbReference type="IntAct" id="P30665">
    <property type="interactions" value="39"/>
</dbReference>
<dbReference type="MINT" id="P30665"/>
<dbReference type="STRING" id="4932.YPR019W"/>
<dbReference type="GlyGen" id="P30665">
    <property type="glycosylation" value="3 sites, 1 O-linked glycan (3 sites)"/>
</dbReference>
<dbReference type="iPTMnet" id="P30665"/>
<dbReference type="PaxDb" id="4932-YPR019W"/>
<dbReference type="PeptideAtlas" id="P30665"/>
<dbReference type="EnsemblFungi" id="YPR019W_mRNA">
    <property type="protein sequence ID" value="YPR019W"/>
    <property type="gene ID" value="YPR019W"/>
</dbReference>
<dbReference type="GeneID" id="856130"/>
<dbReference type="KEGG" id="sce:YPR019W"/>
<dbReference type="AGR" id="SGD:S000006223"/>
<dbReference type="SGD" id="S000006223">
    <property type="gene designation" value="MCM4"/>
</dbReference>
<dbReference type="VEuPathDB" id="FungiDB:YPR019W"/>
<dbReference type="eggNOG" id="KOG0478">
    <property type="taxonomic scope" value="Eukaryota"/>
</dbReference>
<dbReference type="GeneTree" id="ENSGT01110000267230"/>
<dbReference type="HOGENOM" id="CLU_000995_7_1_1"/>
<dbReference type="InParanoid" id="P30665"/>
<dbReference type="OMA" id="AFFKCNV"/>
<dbReference type="OrthoDB" id="10251574at2759"/>
<dbReference type="BioCyc" id="YEAST:G3O-34179-MONOMER"/>
<dbReference type="Reactome" id="R-SCE-176187">
    <property type="pathway name" value="Activation of ATR in response to replication stress"/>
</dbReference>
<dbReference type="Reactome" id="R-SCE-68867">
    <property type="pathway name" value="Assembly of the pre-replicative complex"/>
</dbReference>
<dbReference type="Reactome" id="R-SCE-68962">
    <property type="pathway name" value="Activation of the pre-replicative complex"/>
</dbReference>
<dbReference type="Reactome" id="R-SCE-69052">
    <property type="pathway name" value="Switching of origins to a post-replicative state"/>
</dbReference>
<dbReference type="BioGRID-ORCS" id="856130">
    <property type="hits" value="7 hits in 10 CRISPR screens"/>
</dbReference>
<dbReference type="CD-CODE" id="E03F929F">
    <property type="entry name" value="Stress granule"/>
</dbReference>
<dbReference type="EvolutionaryTrace" id="P30665"/>
<dbReference type="PRO" id="PR:P30665"/>
<dbReference type="Proteomes" id="UP000002311">
    <property type="component" value="Chromosome XVI"/>
</dbReference>
<dbReference type="RNAct" id="P30665">
    <property type="molecule type" value="protein"/>
</dbReference>
<dbReference type="GO" id="GO:0071162">
    <property type="term" value="C:CMG complex"/>
    <property type="evidence" value="ECO:0000314"/>
    <property type="project" value="SGD"/>
</dbReference>
<dbReference type="GO" id="GO:0005737">
    <property type="term" value="C:cytoplasm"/>
    <property type="evidence" value="ECO:0000314"/>
    <property type="project" value="SGD"/>
</dbReference>
<dbReference type="GO" id="GO:0031261">
    <property type="term" value="C:DNA replication preinitiation complex"/>
    <property type="evidence" value="ECO:0000314"/>
    <property type="project" value="SGD"/>
</dbReference>
<dbReference type="GO" id="GO:0042555">
    <property type="term" value="C:MCM complex"/>
    <property type="evidence" value="ECO:0000314"/>
    <property type="project" value="SGD"/>
</dbReference>
<dbReference type="GO" id="GO:0097373">
    <property type="term" value="C:MCM core complex"/>
    <property type="evidence" value="ECO:0000314"/>
    <property type="project" value="SGD"/>
</dbReference>
<dbReference type="GO" id="GO:0005656">
    <property type="term" value="C:nuclear pre-replicative complex"/>
    <property type="evidence" value="ECO:0000314"/>
    <property type="project" value="SGD"/>
</dbReference>
<dbReference type="GO" id="GO:0043596">
    <property type="term" value="C:nuclear replication fork"/>
    <property type="evidence" value="ECO:0000314"/>
    <property type="project" value="SGD"/>
</dbReference>
<dbReference type="GO" id="GO:0005654">
    <property type="term" value="C:nucleoplasm"/>
    <property type="evidence" value="ECO:0000304"/>
    <property type="project" value="Reactome"/>
</dbReference>
<dbReference type="GO" id="GO:0005634">
    <property type="term" value="C:nucleus"/>
    <property type="evidence" value="ECO:0000314"/>
    <property type="project" value="SGD"/>
</dbReference>
<dbReference type="GO" id="GO:0031298">
    <property type="term" value="C:replication fork protection complex"/>
    <property type="evidence" value="ECO:0007669"/>
    <property type="project" value="UniProtKB-ARBA"/>
</dbReference>
<dbReference type="GO" id="GO:0005524">
    <property type="term" value="F:ATP binding"/>
    <property type="evidence" value="ECO:0007669"/>
    <property type="project" value="UniProtKB-KW"/>
</dbReference>
<dbReference type="GO" id="GO:0016887">
    <property type="term" value="F:ATP hydrolysis activity"/>
    <property type="evidence" value="ECO:0007669"/>
    <property type="project" value="RHEA"/>
</dbReference>
<dbReference type="GO" id="GO:0003678">
    <property type="term" value="F:DNA helicase activity"/>
    <property type="evidence" value="ECO:0007669"/>
    <property type="project" value="InterPro"/>
</dbReference>
<dbReference type="GO" id="GO:0003688">
    <property type="term" value="F:DNA replication origin binding"/>
    <property type="evidence" value="ECO:0000314"/>
    <property type="project" value="SGD"/>
</dbReference>
<dbReference type="GO" id="GO:0004386">
    <property type="term" value="F:helicase activity"/>
    <property type="evidence" value="ECO:0000269"/>
    <property type="project" value="Reactome"/>
</dbReference>
<dbReference type="GO" id="GO:0003697">
    <property type="term" value="F:single-stranded DNA binding"/>
    <property type="evidence" value="ECO:0000315"/>
    <property type="project" value="SGD"/>
</dbReference>
<dbReference type="GO" id="GO:0006260">
    <property type="term" value="P:DNA replication"/>
    <property type="evidence" value="ECO:0000314"/>
    <property type="project" value="SGD"/>
</dbReference>
<dbReference type="GO" id="GO:0006270">
    <property type="term" value="P:DNA replication initiation"/>
    <property type="evidence" value="ECO:0000316"/>
    <property type="project" value="SGD"/>
</dbReference>
<dbReference type="GO" id="GO:0006271">
    <property type="term" value="P:DNA strand elongation involved in DNA replication"/>
    <property type="evidence" value="ECO:0000315"/>
    <property type="project" value="SGD"/>
</dbReference>
<dbReference type="GO" id="GO:0000727">
    <property type="term" value="P:double-strand break repair via break-induced replication"/>
    <property type="evidence" value="ECO:0000315"/>
    <property type="project" value="SGD"/>
</dbReference>
<dbReference type="GO" id="GO:1902975">
    <property type="term" value="P:mitotic DNA replication initiation"/>
    <property type="evidence" value="ECO:0000318"/>
    <property type="project" value="GO_Central"/>
</dbReference>
<dbReference type="GO" id="GO:0033260">
    <property type="term" value="P:nuclear DNA replication"/>
    <property type="evidence" value="ECO:0000315"/>
    <property type="project" value="SGD"/>
</dbReference>
<dbReference type="GO" id="GO:0006267">
    <property type="term" value="P:pre-replicative complex assembly involved in nuclear cell cycle DNA replication"/>
    <property type="evidence" value="ECO:0000314"/>
    <property type="project" value="SGD"/>
</dbReference>
<dbReference type="GO" id="GO:0006279">
    <property type="term" value="P:premeiotic DNA replication"/>
    <property type="evidence" value="ECO:0000314"/>
    <property type="project" value="ComplexPortal"/>
</dbReference>
<dbReference type="CDD" id="cd17755">
    <property type="entry name" value="MCM4"/>
    <property type="match status" value="1"/>
</dbReference>
<dbReference type="FunFam" id="2.20.28.10:FF:000003">
    <property type="entry name" value="DNA helicase"/>
    <property type="match status" value="1"/>
</dbReference>
<dbReference type="FunFam" id="3.30.1640.10:FF:000011">
    <property type="entry name" value="DNA helicase"/>
    <property type="match status" value="1"/>
</dbReference>
<dbReference type="FunFam" id="3.40.50.300:FF:000217">
    <property type="entry name" value="DNA helicase"/>
    <property type="match status" value="1"/>
</dbReference>
<dbReference type="Gene3D" id="2.20.28.10">
    <property type="match status" value="1"/>
</dbReference>
<dbReference type="Gene3D" id="3.30.1640.10">
    <property type="entry name" value="mini-chromosome maintenance (MCM) complex, chain A, domain 1"/>
    <property type="match status" value="1"/>
</dbReference>
<dbReference type="Gene3D" id="2.40.50.140">
    <property type="entry name" value="Nucleic acid-binding proteins"/>
    <property type="match status" value="1"/>
</dbReference>
<dbReference type="Gene3D" id="3.40.50.300">
    <property type="entry name" value="P-loop containing nucleotide triphosphate hydrolases"/>
    <property type="match status" value="1"/>
</dbReference>
<dbReference type="Gene3D" id="1.10.10.10">
    <property type="entry name" value="Winged helix-like DNA-binding domain superfamily/Winged helix DNA-binding domain"/>
    <property type="match status" value="1"/>
</dbReference>
<dbReference type="InterPro" id="IPR031327">
    <property type="entry name" value="MCM"/>
</dbReference>
<dbReference type="InterPro" id="IPR008047">
    <property type="entry name" value="MCM_4"/>
</dbReference>
<dbReference type="InterPro" id="IPR018525">
    <property type="entry name" value="MCM_CS"/>
</dbReference>
<dbReference type="InterPro" id="IPR001208">
    <property type="entry name" value="MCM_dom"/>
</dbReference>
<dbReference type="InterPro" id="IPR041562">
    <property type="entry name" value="MCM_lid"/>
</dbReference>
<dbReference type="InterPro" id="IPR027925">
    <property type="entry name" value="MCM_N"/>
</dbReference>
<dbReference type="InterPro" id="IPR033762">
    <property type="entry name" value="MCM_OB"/>
</dbReference>
<dbReference type="InterPro" id="IPR012340">
    <property type="entry name" value="NA-bd_OB-fold"/>
</dbReference>
<dbReference type="InterPro" id="IPR027417">
    <property type="entry name" value="P-loop_NTPase"/>
</dbReference>
<dbReference type="InterPro" id="IPR036388">
    <property type="entry name" value="WH-like_DNA-bd_sf"/>
</dbReference>
<dbReference type="PANTHER" id="PTHR11630">
    <property type="entry name" value="DNA REPLICATION LICENSING FACTOR MCM FAMILY MEMBER"/>
    <property type="match status" value="1"/>
</dbReference>
<dbReference type="PANTHER" id="PTHR11630:SF66">
    <property type="entry name" value="DNA REPLICATION LICENSING FACTOR MCM4"/>
    <property type="match status" value="1"/>
</dbReference>
<dbReference type="Pfam" id="PF00493">
    <property type="entry name" value="MCM"/>
    <property type="match status" value="1"/>
</dbReference>
<dbReference type="Pfam" id="PF21128">
    <property type="entry name" value="MCM4_WHD"/>
    <property type="match status" value="1"/>
</dbReference>
<dbReference type="Pfam" id="PF17855">
    <property type="entry name" value="MCM_lid"/>
    <property type="match status" value="1"/>
</dbReference>
<dbReference type="Pfam" id="PF14551">
    <property type="entry name" value="MCM_N"/>
    <property type="match status" value="1"/>
</dbReference>
<dbReference type="Pfam" id="PF17207">
    <property type="entry name" value="MCM_OB"/>
    <property type="match status" value="1"/>
</dbReference>
<dbReference type="PRINTS" id="PR01657">
    <property type="entry name" value="MCMFAMILY"/>
</dbReference>
<dbReference type="PRINTS" id="PR01660">
    <property type="entry name" value="MCMPROTEIN4"/>
</dbReference>
<dbReference type="SMART" id="SM00350">
    <property type="entry name" value="MCM"/>
    <property type="match status" value="1"/>
</dbReference>
<dbReference type="SUPFAM" id="SSF50249">
    <property type="entry name" value="Nucleic acid-binding proteins"/>
    <property type="match status" value="1"/>
</dbReference>
<dbReference type="SUPFAM" id="SSF52540">
    <property type="entry name" value="P-loop containing nucleoside triphosphate hydrolases"/>
    <property type="match status" value="1"/>
</dbReference>
<dbReference type="PROSITE" id="PS00847">
    <property type="entry name" value="MCM_1"/>
    <property type="match status" value="1"/>
</dbReference>
<dbReference type="PROSITE" id="PS50051">
    <property type="entry name" value="MCM_2"/>
    <property type="match status" value="1"/>
</dbReference>
<accession>P30665</accession>
<accession>D6W429</accession>
<comment type="function">
    <text evidence="6 7">Acts as a component of the MCM2-7 complex (MCM complex) which is the putative replicative helicase essential for 'once per cell cycle' DNA replication initiation and elongation in eukaryotic cells. The active ATPase sites in the MCM2-7 ring are formed through the interaction surfaces of two neighboring subunits such that a critical structure of a conserved arginine finger motif is provided in trans relative to the ATP-binding site of the Walker A box of the adjacent subunit. The six ATPase active sites, however, are likely to contribute differentially to the complex helicase activity. Once loaded onto DNA, double hexamers can slide on dsDNA in the absence of ATPase activity. Required for S phase execution.</text>
</comment>
<comment type="catalytic activity">
    <reaction>
        <text>ATP + H2O = ADP + phosphate + H(+)</text>
        <dbReference type="Rhea" id="RHEA:13065"/>
        <dbReference type="ChEBI" id="CHEBI:15377"/>
        <dbReference type="ChEBI" id="CHEBI:15378"/>
        <dbReference type="ChEBI" id="CHEBI:30616"/>
        <dbReference type="ChEBI" id="CHEBI:43474"/>
        <dbReference type="ChEBI" id="CHEBI:456216"/>
        <dbReference type="EC" id="3.6.4.12"/>
    </reaction>
</comment>
<comment type="subunit">
    <text evidence="6 7">Component of the MCM2-7 complex. The complex forms a toroidal hexameric ring with the proposed subunit order MCM2-MCM6-MCM4-MCM7-MCM3-MCM5; loaded onto DNA, forms a head-head double hexamer.</text>
</comment>
<comment type="interaction">
    <interactant intactId="EBI-4326">
        <id>P30665</id>
    </interactant>
    <interactant intactId="EBI-5965">
        <id>P32354</id>
        <label>MCM10</label>
    </interactant>
    <organismsDiffer>false</organismsDiffer>
    <experiments>4</experiments>
</comment>
<comment type="interaction">
    <interactant intactId="EBI-4326">
        <id>P30665</id>
    </interactant>
    <interactant intactId="EBI-10533">
        <id>P29469</id>
        <label>MCM2</label>
    </interactant>
    <organismsDiffer>false</organismsDiffer>
    <experiments>16</experiments>
</comment>
<comment type="interaction">
    <interactant intactId="EBI-4326">
        <id>P30665</id>
    </interactant>
    <interactant intactId="EBI-10556">
        <id>P53091</id>
        <label>MCM6</label>
    </interactant>
    <organismsDiffer>false</organismsDiffer>
    <experiments>8</experiments>
</comment>
<comment type="interaction">
    <interactant intactId="EBI-4326">
        <id>P30665</id>
    </interactant>
    <interactant intactId="EBI-4300">
        <id>P38132</id>
        <label>MCM7</label>
    </interactant>
    <organismsDiffer>false</organismsDiffer>
    <experiments>4</experiments>
</comment>
<comment type="interaction">
    <interactant intactId="EBI-4326">
        <id>P30665</id>
    </interactant>
    <interactant intactId="EBI-22066">
        <id>Q12488</id>
        <label>PSF1</label>
    </interactant>
    <organismsDiffer>false</organismsDiffer>
    <experiments>6</experiments>
</comment>
<comment type="interaction">
    <interactant intactId="EBI-4326">
        <id>P30665</id>
    </interactant>
    <interactant intactId="EBI-17490">
        <id>Q12306</id>
        <label>SMT3</label>
    </interactant>
    <organismsDiffer>false</organismsDiffer>
    <experiments>2</experiments>
</comment>
<comment type="subcellular location">
    <subcellularLocation>
        <location evidence="1">Nucleus</location>
    </subcellularLocation>
</comment>
<comment type="miscellaneous">
    <text evidence="4">Present with 8800 molecules/cell in log phase SD medium.</text>
</comment>
<comment type="miscellaneous">
    <text>Early fractionation of eukaryotic MCM proteins yielded a variety of dimeric, trimeric and tetrameric complexes with unclear biological significance. Specifically a MCM467 subcomplex is shown to have in vitro helicase activity which is inhibited by the MCM2 subunit. The MCM2-7 hexamer is the proposed physiological active complex.</text>
</comment>
<comment type="similarity">
    <text evidence="8">Belongs to the MCM family.</text>
</comment>
<gene>
    <name type="primary">MCM4</name>
    <name type="synonym">CDC54</name>
    <name type="synonym">HCD21</name>
    <name type="ordered locus">YPR019W</name>
    <name type="ORF">YP9531.13</name>
</gene>
<keyword id="KW-0002">3D-structure</keyword>
<keyword id="KW-0067">ATP-binding</keyword>
<keyword id="KW-0131">Cell cycle</keyword>
<keyword id="KW-0235">DNA replication</keyword>
<keyword id="KW-0238">DNA-binding</keyword>
<keyword id="KW-0347">Helicase</keyword>
<keyword id="KW-0378">Hydrolase</keyword>
<keyword id="KW-0547">Nucleotide-binding</keyword>
<keyword id="KW-0539">Nucleus</keyword>
<keyword id="KW-0597">Phosphoprotein</keyword>
<keyword id="KW-1185">Reference proteome</keyword>
<evidence type="ECO:0000250" key="1"/>
<evidence type="ECO:0000255" key="2"/>
<evidence type="ECO:0000256" key="3">
    <source>
        <dbReference type="SAM" id="MobiDB-lite"/>
    </source>
</evidence>
<evidence type="ECO:0000269" key="4">
    <source>
    </source>
</evidence>
<evidence type="ECO:0000269" key="5">
    <source>
    </source>
</evidence>
<evidence type="ECO:0000269" key="6">
    <source>
    </source>
</evidence>
<evidence type="ECO:0000269" key="7">
    <source>
    </source>
</evidence>
<evidence type="ECO:0000305" key="8"/>
<evidence type="ECO:0007744" key="9">
    <source>
    </source>
</evidence>
<evidence type="ECO:0007744" key="10">
    <source>
    </source>
</evidence>
<evidence type="ECO:0007829" key="11">
    <source>
        <dbReference type="PDB" id="6SKO"/>
    </source>
</evidence>
<evidence type="ECO:0007829" key="12">
    <source>
        <dbReference type="PDB" id="7PMK"/>
    </source>
</evidence>
<feature type="chain" id="PRO_0000194105" description="DNA replication licensing factor MCM4">
    <location>
        <begin position="1"/>
        <end position="933"/>
    </location>
</feature>
<feature type="domain" description="MCM">
    <location>
        <begin position="518"/>
        <end position="725"/>
    </location>
</feature>
<feature type="region of interest" description="Disordered" evidence="3">
    <location>
        <begin position="1"/>
        <end position="149"/>
    </location>
</feature>
<feature type="region of interest" description="Disordered" evidence="3">
    <location>
        <begin position="154"/>
        <end position="173"/>
    </location>
</feature>
<feature type="short sequence motif" description="Arginine finger">
    <location>
        <begin position="700"/>
        <end position="703"/>
    </location>
</feature>
<feature type="compositionally biased region" description="Low complexity" evidence="3">
    <location>
        <begin position="27"/>
        <end position="42"/>
    </location>
</feature>
<feature type="compositionally biased region" description="Polar residues" evidence="3">
    <location>
        <begin position="49"/>
        <end position="59"/>
    </location>
</feature>
<feature type="compositionally biased region" description="Polar residues" evidence="3">
    <location>
        <begin position="69"/>
        <end position="85"/>
    </location>
</feature>
<feature type="compositionally biased region" description="Low complexity" evidence="3">
    <location>
        <begin position="86"/>
        <end position="103"/>
    </location>
</feature>
<feature type="compositionally biased region" description="Polar residues" evidence="3">
    <location>
        <begin position="117"/>
        <end position="129"/>
    </location>
</feature>
<feature type="compositionally biased region" description="Low complexity" evidence="3">
    <location>
        <begin position="164"/>
        <end position="173"/>
    </location>
</feature>
<feature type="binding site" evidence="2">
    <location>
        <begin position="568"/>
        <end position="575"/>
    </location>
    <ligand>
        <name>ATP</name>
        <dbReference type="ChEBI" id="CHEBI:30616"/>
    </ligand>
</feature>
<feature type="modified residue" description="Phosphoserine" evidence="9 10">
    <location>
        <position position="52"/>
    </location>
</feature>
<feature type="modified residue" description="Phosphoserine" evidence="9">
    <location>
        <position position="56"/>
    </location>
</feature>
<feature type="modified residue" description="Phosphoserine" evidence="10">
    <location>
        <position position="69"/>
    </location>
</feature>
<feature type="mutagenesis site" description="Loss of MCM2-7 complex helicase activity." evidence="5">
    <original>K</original>
    <variation>A</variation>
    <location>
        <position position="574"/>
    </location>
</feature>
<feature type="strand" evidence="12">
    <location>
        <begin position="177"/>
        <end position="180"/>
    </location>
</feature>
<feature type="turn" evidence="12">
    <location>
        <begin position="181"/>
        <end position="183"/>
    </location>
</feature>
<feature type="helix" evidence="12">
    <location>
        <begin position="187"/>
        <end position="198"/>
    </location>
</feature>
<feature type="helix" evidence="12">
    <location>
        <begin position="204"/>
        <end position="209"/>
    </location>
</feature>
<feature type="helix" evidence="12">
    <location>
        <begin position="213"/>
        <end position="215"/>
    </location>
</feature>
<feature type="helix" evidence="12">
    <location>
        <begin position="218"/>
        <end position="221"/>
    </location>
</feature>
<feature type="helix" evidence="12">
    <location>
        <begin position="225"/>
        <end position="235"/>
    </location>
</feature>
<feature type="strand" evidence="12">
    <location>
        <begin position="240"/>
        <end position="244"/>
    </location>
</feature>
<feature type="helix" evidence="12">
    <location>
        <begin position="246"/>
        <end position="249"/>
    </location>
</feature>
<feature type="helix" evidence="12">
    <location>
        <begin position="252"/>
        <end position="254"/>
    </location>
</feature>
<feature type="helix" evidence="12">
    <location>
        <begin position="255"/>
        <end position="263"/>
    </location>
</feature>
<feature type="helix" evidence="12">
    <location>
        <begin position="265"/>
        <end position="286"/>
    </location>
</feature>
<feature type="helix" evidence="12">
    <location>
        <begin position="293"/>
        <end position="298"/>
    </location>
</feature>
<feature type="strand" evidence="12">
    <location>
        <begin position="302"/>
        <end position="306"/>
    </location>
</feature>
<feature type="helix" evidence="12">
    <location>
        <begin position="314"/>
        <end position="316"/>
    </location>
</feature>
<feature type="helix" evidence="12">
    <location>
        <begin position="319"/>
        <end position="321"/>
    </location>
</feature>
<feature type="strand" evidence="12">
    <location>
        <begin position="324"/>
        <end position="335"/>
    </location>
</feature>
<feature type="strand" evidence="12">
    <location>
        <begin position="339"/>
        <end position="349"/>
    </location>
</feature>
<feature type="turn" evidence="12">
    <location>
        <begin position="350"/>
        <end position="352"/>
    </location>
</feature>
<feature type="strand" evidence="12">
    <location>
        <begin position="355"/>
        <end position="359"/>
    </location>
</feature>
<feature type="turn" evidence="12">
    <location>
        <begin position="374"/>
        <end position="376"/>
    </location>
</feature>
<feature type="strand" evidence="12">
    <location>
        <begin position="382"/>
        <end position="384"/>
    </location>
</feature>
<feature type="helix" evidence="12">
    <location>
        <begin position="386"/>
        <end position="388"/>
    </location>
</feature>
<feature type="strand" evidence="12">
    <location>
        <begin position="389"/>
        <end position="401"/>
    </location>
</feature>
<feature type="turn" evidence="12">
    <location>
        <begin position="403"/>
        <end position="405"/>
    </location>
</feature>
<feature type="strand" evidence="12">
    <location>
        <begin position="414"/>
        <end position="420"/>
    </location>
</feature>
<feature type="helix" evidence="12">
    <location>
        <begin position="421"/>
        <end position="423"/>
    </location>
</feature>
<feature type="strand" evidence="12">
    <location>
        <begin position="432"/>
        <end position="442"/>
    </location>
</feature>
<feature type="strand" evidence="12">
    <location>
        <begin position="453"/>
        <end position="456"/>
    </location>
</feature>
<feature type="strand" evidence="12">
    <location>
        <begin position="458"/>
        <end position="468"/>
    </location>
</feature>
<feature type="helix" evidence="12">
    <location>
        <begin position="506"/>
        <end position="513"/>
    </location>
</feature>
<feature type="helix" evidence="12">
    <location>
        <begin position="518"/>
        <end position="525"/>
    </location>
</feature>
<feature type="helix" evidence="12">
    <location>
        <begin position="534"/>
        <end position="545"/>
    </location>
</feature>
<feature type="strand" evidence="11">
    <location>
        <begin position="553"/>
        <end position="555"/>
    </location>
</feature>
<feature type="strand" evidence="12">
    <location>
        <begin position="564"/>
        <end position="568"/>
    </location>
</feature>
<feature type="strand" evidence="12">
    <location>
        <begin position="570"/>
        <end position="572"/>
    </location>
</feature>
<feature type="helix" evidence="12">
    <location>
        <begin position="574"/>
        <end position="584"/>
    </location>
</feature>
<feature type="strand" evidence="12">
    <location>
        <begin position="585"/>
        <end position="587"/>
    </location>
</feature>
<feature type="strand" evidence="12">
    <location>
        <begin position="589"/>
        <end position="594"/>
    </location>
</feature>
<feature type="helix" evidence="11">
    <location>
        <begin position="598"/>
        <end position="601"/>
    </location>
</feature>
<feature type="strand" evidence="12">
    <location>
        <begin position="604"/>
        <end position="606"/>
    </location>
</feature>
<feature type="strand" evidence="12">
    <location>
        <begin position="615"/>
        <end position="617"/>
    </location>
</feature>
<feature type="helix" evidence="12">
    <location>
        <begin position="620"/>
        <end position="623"/>
    </location>
</feature>
<feature type="turn" evidence="12">
    <location>
        <begin position="624"/>
        <end position="626"/>
    </location>
</feature>
<feature type="strand" evidence="12">
    <location>
        <begin position="627"/>
        <end position="633"/>
    </location>
</feature>
<feature type="helix" evidence="12">
    <location>
        <begin position="634"/>
        <end position="636"/>
    </location>
</feature>
<feature type="helix" evidence="12">
    <location>
        <begin position="639"/>
        <end position="650"/>
    </location>
</feature>
<feature type="strand" evidence="12">
    <location>
        <begin position="651"/>
        <end position="658"/>
    </location>
</feature>
<feature type="strand" evidence="12">
    <location>
        <begin position="661"/>
        <end position="666"/>
    </location>
</feature>
<feature type="strand" evidence="12">
    <location>
        <begin position="670"/>
        <end position="674"/>
    </location>
</feature>
<feature type="strand" evidence="12">
    <location>
        <begin position="677"/>
        <end position="680"/>
    </location>
</feature>
<feature type="strand" evidence="11">
    <location>
        <begin position="684"/>
        <end position="686"/>
    </location>
</feature>
<feature type="helix" evidence="12">
    <location>
        <begin position="688"/>
        <end position="691"/>
    </location>
</feature>
<feature type="strand" evidence="12">
    <location>
        <begin position="692"/>
        <end position="694"/>
    </location>
</feature>
<feature type="helix" evidence="12">
    <location>
        <begin position="696"/>
        <end position="700"/>
    </location>
</feature>
<feature type="strand" evidence="12">
    <location>
        <begin position="703"/>
        <end position="708"/>
    </location>
</feature>
<feature type="helix" evidence="12">
    <location>
        <begin position="714"/>
        <end position="726"/>
    </location>
</feature>
<feature type="turn" evidence="12">
    <location>
        <begin position="727"/>
        <end position="729"/>
    </location>
</feature>
<feature type="helix" evidence="12">
    <location>
        <begin position="746"/>
        <end position="757"/>
    </location>
</feature>
<feature type="helix" evidence="12">
    <location>
        <begin position="764"/>
        <end position="779"/>
    </location>
</feature>
<feature type="helix" evidence="12">
    <location>
        <begin position="795"/>
        <end position="810"/>
    </location>
</feature>
<feature type="helix" evidence="12">
    <location>
        <begin position="811"/>
        <end position="813"/>
    </location>
</feature>
<feature type="strand" evidence="12">
    <location>
        <begin position="815"/>
        <end position="817"/>
    </location>
</feature>
<feature type="helix" evidence="12">
    <location>
        <begin position="819"/>
        <end position="833"/>
    </location>
</feature>
<feature type="strand" evidence="11">
    <location>
        <begin position="840"/>
        <end position="843"/>
    </location>
</feature>
<feature type="turn" evidence="11">
    <location>
        <begin position="847"/>
        <end position="851"/>
    </location>
</feature>
<organism>
    <name type="scientific">Saccharomyces cerevisiae (strain ATCC 204508 / S288c)</name>
    <name type="common">Baker's yeast</name>
    <dbReference type="NCBI Taxonomy" id="559292"/>
    <lineage>
        <taxon>Eukaryota</taxon>
        <taxon>Fungi</taxon>
        <taxon>Dikarya</taxon>
        <taxon>Ascomycota</taxon>
        <taxon>Saccharomycotina</taxon>
        <taxon>Saccharomycetes</taxon>
        <taxon>Saccharomycetales</taxon>
        <taxon>Saccharomycetaceae</taxon>
        <taxon>Saccharomyces</taxon>
    </lineage>
</organism>
<sequence length="933" mass="105003">MSQQSSSPTKEDNNSSSPVVPNPDSVPPQLSSPALFYSSSSSQGDIYGRNNSQNLSQGEGNIRAAIGSSPLNFPSSSQRQNSDVFQSQGRQGRIRSSASASGRSRYHSDLRSDRALPTSSSSLGRNGQNRVHMRRNDIHTSDLSSPRRIVDFDTRSGVNTLDTSSSSAPPSEASEPLRIIWGTNVSIQECTTNFRNFLMSFKYKFRKILDEREEFINNTTDEELYYIKQLNEMRELGTSNLNLDARNLLAYKQTEDLYHQLLNYPQEVISIMDQTIKDCMVSLIVDNNLDYDLDEIETKFYKVRPYNVGSCKGMRELNPNDIDKLINLKGLVLRSTPVIPDMKVAFFKCNVCDHTMAVEIDRGVIQEPARCERIDCNEPNSMSLIHNRCSFADKQVIKLQETPDFVPDGQTPHSISLCVYDELVDSCRAGDRIEVTGTFRSIPIRANSRQRVLKSLYKTYVDVVHVKKVSDKRLDVDTSTIEQELMQNKVDHNEVEEVRQITDQDLAKIREVAAREDLYSLLARSIAPSIYELEDVKKGILLQLFGGTNKTFTKGGRYRGDINILLCGDPSTSKSQILQYVHKITPRGVYTSGKGSSAVGLTAYITRDVDTKQLVLESGALVLSDGGVCCIDEFDKMSDSTRSVLHEVMEQQTISIAKAGIITTLNARSSILASANPIGSRYNPNLPVTENIDLPPPLLSRFDLVYLVLDKVDEKNDRELAKHLTNLYLEDKPEHISQDDVLPVEFLTMYISYAKEHIHPIITEAAKTELVRAYVGMRKMGDDSRSDEKRITATTRQLESMIRLAEAHAKMKLKNVVELEDVQEAVRLIRSAIKDYATDPKTGKIDMNLVQTGKSVIQRKLQEDLSREIMNVLKDQASDSMSFNELIKQINEHSQDRVESSDIQEALSRLQQEDKVIVLGEGVRRSVRLNNRV</sequence>
<reference key="1">
    <citation type="submission" date="1994-09" db="EMBL/GenBank/DDBJ databases">
        <authorList>
            <person name="Dalton S."/>
        </authorList>
    </citation>
    <scope>NUCLEOTIDE SEQUENCE [GENOMIC DNA]</scope>
</reference>
<reference key="2">
    <citation type="journal article" date="1997" name="Nature">
        <title>The nucleotide sequence of Saccharomyces cerevisiae chromosome XVI.</title>
        <authorList>
            <person name="Bussey H."/>
            <person name="Storms R.K."/>
            <person name="Ahmed A."/>
            <person name="Albermann K."/>
            <person name="Allen E."/>
            <person name="Ansorge W."/>
            <person name="Araujo R."/>
            <person name="Aparicio A."/>
            <person name="Barrell B.G."/>
            <person name="Badcock K."/>
            <person name="Benes V."/>
            <person name="Botstein D."/>
            <person name="Bowman S."/>
            <person name="Brueckner M."/>
            <person name="Carpenter J."/>
            <person name="Cherry J.M."/>
            <person name="Chung E."/>
            <person name="Churcher C.M."/>
            <person name="Coster F."/>
            <person name="Davis K."/>
            <person name="Davis R.W."/>
            <person name="Dietrich F.S."/>
            <person name="Delius H."/>
            <person name="DiPaolo T."/>
            <person name="Dubois E."/>
            <person name="Duesterhoeft A."/>
            <person name="Duncan M."/>
            <person name="Floeth M."/>
            <person name="Fortin N."/>
            <person name="Friesen J.D."/>
            <person name="Fritz C."/>
            <person name="Goffeau A."/>
            <person name="Hall J."/>
            <person name="Hebling U."/>
            <person name="Heumann K."/>
            <person name="Hilbert H."/>
            <person name="Hillier L.W."/>
            <person name="Hunicke-Smith S."/>
            <person name="Hyman R.W."/>
            <person name="Johnston M."/>
            <person name="Kalman S."/>
            <person name="Kleine K."/>
            <person name="Komp C."/>
            <person name="Kurdi O."/>
            <person name="Lashkari D."/>
            <person name="Lew H."/>
            <person name="Lin A."/>
            <person name="Lin D."/>
            <person name="Louis E.J."/>
            <person name="Marathe R."/>
            <person name="Messenguy F."/>
            <person name="Mewes H.-W."/>
            <person name="Mirtipati S."/>
            <person name="Moestl D."/>
            <person name="Mueller-Auer S."/>
            <person name="Namath A."/>
            <person name="Nentwich U."/>
            <person name="Oefner P."/>
            <person name="Pearson D."/>
            <person name="Petel F.X."/>
            <person name="Pohl T.M."/>
            <person name="Purnelle B."/>
            <person name="Rajandream M.A."/>
            <person name="Rechmann S."/>
            <person name="Rieger M."/>
            <person name="Riles L."/>
            <person name="Roberts D."/>
            <person name="Schaefer M."/>
            <person name="Scharfe M."/>
            <person name="Scherens B."/>
            <person name="Schramm S."/>
            <person name="Schroeder M."/>
            <person name="Sdicu A.-M."/>
            <person name="Tettelin H."/>
            <person name="Urrestarazu L.A."/>
            <person name="Ushinsky S."/>
            <person name="Vierendeels F."/>
            <person name="Vissers S."/>
            <person name="Voss H."/>
            <person name="Walsh S.V."/>
            <person name="Wambutt R."/>
            <person name="Wang Y."/>
            <person name="Wedler E."/>
            <person name="Wedler H."/>
            <person name="Winnett E."/>
            <person name="Zhong W.-W."/>
            <person name="Zollner A."/>
            <person name="Vo D.H."/>
            <person name="Hani J."/>
        </authorList>
    </citation>
    <scope>NUCLEOTIDE SEQUENCE [LARGE SCALE GENOMIC DNA]</scope>
    <source>
        <strain>ATCC 204508 / S288c</strain>
    </source>
</reference>
<reference key="3">
    <citation type="journal article" date="2008" name="Mol. Cell">
        <title>The Mcm2-7 complex has in vitro helicase activity.</title>
        <authorList>
            <person name="Bochman M.L."/>
            <person name="Schwacha A."/>
        </authorList>
    </citation>
    <scope>RECONSTITUTION OF THE MCM2-7 COMPLEX</scope>
    <scope>HELICASE ACTIVITY OF THE MCM2-7 COMPLEX</scope>
    <scope>MUTAGENESIS OF LYS-574</scope>
</reference>
<reference key="4">
    <citation type="journal article" date="2008" name="Mol. Cell. Proteomics">
        <title>A multidimensional chromatography technology for in-depth phosphoproteome analysis.</title>
        <authorList>
            <person name="Albuquerque C.P."/>
            <person name="Smolka M.B."/>
            <person name="Payne S.H."/>
            <person name="Bafna V."/>
            <person name="Eng J."/>
            <person name="Zhou H."/>
        </authorList>
    </citation>
    <scope>PHOSPHORYLATION [LARGE SCALE ANALYSIS] AT SER-52 AND SER-56</scope>
    <scope>IDENTIFICATION BY MASS SPECTROMETRY [LARGE SCALE ANALYSIS]</scope>
</reference>
<reference key="5">
    <citation type="journal article" date="2009" name="Cell">
        <title>Concerted loading of Mcm2-7 double hexamers around DNA during DNA replication origin licensing.</title>
        <authorList>
            <person name="Remus D."/>
            <person name="Beuron F."/>
            <person name="Tolun G."/>
            <person name="Griffith J.D."/>
            <person name="Morris E.P."/>
            <person name="Diffley J.F."/>
        </authorList>
    </citation>
    <scope>IDENTIFICATION IN THE MCM2-7 COMPLEX</scope>
    <scope>FUNCTION OF THE MCM2-7 COMPLEX</scope>
    <scope>ELECTRON MICROSCOPY OF THE MCM2-7 COMPLEX</scope>
</reference>
<reference key="6">
    <citation type="journal article" date="2009" name="Proc. Natl. Acad. Sci. U.S.A.">
        <title>A double-hexameric MCM2-7 complex is loaded onto origin DNA during licensing of eukaryotic DNA replication.</title>
        <authorList>
            <person name="Evrin C."/>
            <person name="Clarke P."/>
            <person name="Zech J."/>
            <person name="Lurz R."/>
            <person name="Sun J."/>
            <person name="Uhle S."/>
            <person name="Li H."/>
            <person name="Stillman B."/>
            <person name="Speck C."/>
        </authorList>
    </citation>
    <scope>IDENTIFICATION IN THE MCM2-7 COMPLEX</scope>
    <scope>FUNCTION OF THE MCM2-7 COMPLEX</scope>
    <scope>ELECTRON MICROSCOPY OF THE MCM2-7 COMPLEX</scope>
</reference>
<reference key="7">
    <citation type="journal article" date="2014" name="G3 (Bethesda)">
        <title>The reference genome sequence of Saccharomyces cerevisiae: Then and now.</title>
        <authorList>
            <person name="Engel S.R."/>
            <person name="Dietrich F.S."/>
            <person name="Fisk D.G."/>
            <person name="Binkley G."/>
            <person name="Balakrishnan R."/>
            <person name="Costanzo M.C."/>
            <person name="Dwight S.S."/>
            <person name="Hitz B.C."/>
            <person name="Karra K."/>
            <person name="Nash R.S."/>
            <person name="Weng S."/>
            <person name="Wong E.D."/>
            <person name="Lloyd P."/>
            <person name="Skrzypek M.S."/>
            <person name="Miyasato S.R."/>
            <person name="Simison M."/>
            <person name="Cherry J.M."/>
        </authorList>
    </citation>
    <scope>GENOME REANNOTATION</scope>
    <source>
        <strain>ATCC 204508 / S288c</strain>
    </source>
</reference>
<reference key="8">
    <citation type="journal article" date="1992" name="Nucleic Acids Res.">
        <title>Fission yeast cdc21+ belongs to a family of proteins involved in an early step of chromosome replication.</title>
        <authorList>
            <person name="Coxon A."/>
            <person name="Maundrell K."/>
            <person name="Kearsey S.E."/>
        </authorList>
    </citation>
    <scope>NUCLEOTIDE SEQUENCE [GENOMIC DNA] OF 571-646</scope>
</reference>
<reference key="9">
    <citation type="journal article" date="2003" name="Nature">
        <title>Global analysis of protein expression in yeast.</title>
        <authorList>
            <person name="Ghaemmaghami S."/>
            <person name="Huh W.-K."/>
            <person name="Bower K."/>
            <person name="Howson R.W."/>
            <person name="Belle A."/>
            <person name="Dephoure N."/>
            <person name="O'Shea E.K."/>
            <person name="Weissman J.S."/>
        </authorList>
    </citation>
    <scope>LEVEL OF PROTEIN EXPRESSION [LARGE SCALE ANALYSIS]</scope>
</reference>
<reference key="10">
    <citation type="journal article" date="2009" name="Science">
        <title>Global analysis of Cdk1 substrate phosphorylation sites provides insights into evolution.</title>
        <authorList>
            <person name="Holt L.J."/>
            <person name="Tuch B.B."/>
            <person name="Villen J."/>
            <person name="Johnson A.D."/>
            <person name="Gygi S.P."/>
            <person name="Morgan D.O."/>
        </authorList>
    </citation>
    <scope>PHOSPHORYLATION [LARGE SCALE ANALYSIS] AT SER-52 AND SER-69</scope>
    <scope>IDENTIFICATION BY MASS SPECTROMETRY [LARGE SCALE ANALYSIS]</scope>
</reference>
<protein>
    <recommendedName>
        <fullName>DNA replication licensing factor MCM4</fullName>
        <ecNumber>3.6.4.12</ecNumber>
    </recommendedName>
    <alternativeName>
        <fullName>Cell division control protein 54</fullName>
    </alternativeName>
</protein>
<proteinExistence type="evidence at protein level"/>
<name>MCM4_YEAST</name>